<feature type="chain" id="PRO_1000052208" description="Large ribosomal subunit protein uL24">
    <location>
        <begin position="1"/>
        <end position="104"/>
    </location>
</feature>
<dbReference type="EMBL" id="CP000513">
    <property type="protein sequence ID" value="ABQ13588.1"/>
    <property type="molecule type" value="Genomic_DNA"/>
</dbReference>
<dbReference type="RefSeq" id="WP_012031559.1">
    <property type="nucleotide sequence ID" value="NC_009446.1"/>
</dbReference>
<dbReference type="SMR" id="A5EX88"/>
<dbReference type="STRING" id="246195.DNO_1264"/>
<dbReference type="KEGG" id="dno:DNO_1264"/>
<dbReference type="eggNOG" id="COG0198">
    <property type="taxonomic scope" value="Bacteria"/>
</dbReference>
<dbReference type="HOGENOM" id="CLU_093315_2_2_6"/>
<dbReference type="OrthoDB" id="9807419at2"/>
<dbReference type="Proteomes" id="UP000000248">
    <property type="component" value="Chromosome"/>
</dbReference>
<dbReference type="GO" id="GO:1990904">
    <property type="term" value="C:ribonucleoprotein complex"/>
    <property type="evidence" value="ECO:0007669"/>
    <property type="project" value="UniProtKB-KW"/>
</dbReference>
<dbReference type="GO" id="GO:0005840">
    <property type="term" value="C:ribosome"/>
    <property type="evidence" value="ECO:0007669"/>
    <property type="project" value="UniProtKB-KW"/>
</dbReference>
<dbReference type="GO" id="GO:0019843">
    <property type="term" value="F:rRNA binding"/>
    <property type="evidence" value="ECO:0007669"/>
    <property type="project" value="UniProtKB-UniRule"/>
</dbReference>
<dbReference type="GO" id="GO:0003735">
    <property type="term" value="F:structural constituent of ribosome"/>
    <property type="evidence" value="ECO:0007669"/>
    <property type="project" value="InterPro"/>
</dbReference>
<dbReference type="GO" id="GO:0006412">
    <property type="term" value="P:translation"/>
    <property type="evidence" value="ECO:0007669"/>
    <property type="project" value="UniProtKB-UniRule"/>
</dbReference>
<dbReference type="CDD" id="cd06089">
    <property type="entry name" value="KOW_RPL26"/>
    <property type="match status" value="1"/>
</dbReference>
<dbReference type="FunFam" id="2.30.30.30:FF:000004">
    <property type="entry name" value="50S ribosomal protein L24"/>
    <property type="match status" value="1"/>
</dbReference>
<dbReference type="Gene3D" id="2.30.30.30">
    <property type="match status" value="1"/>
</dbReference>
<dbReference type="HAMAP" id="MF_01326_B">
    <property type="entry name" value="Ribosomal_uL24_B"/>
    <property type="match status" value="1"/>
</dbReference>
<dbReference type="InterPro" id="IPR014722">
    <property type="entry name" value="Rib_uL2_dom2"/>
</dbReference>
<dbReference type="InterPro" id="IPR003256">
    <property type="entry name" value="Ribosomal_uL24"/>
</dbReference>
<dbReference type="InterPro" id="IPR041988">
    <property type="entry name" value="Ribosomal_uL24_KOW"/>
</dbReference>
<dbReference type="InterPro" id="IPR008991">
    <property type="entry name" value="Translation_prot_SH3-like_sf"/>
</dbReference>
<dbReference type="NCBIfam" id="TIGR01079">
    <property type="entry name" value="rplX_bact"/>
    <property type="match status" value="1"/>
</dbReference>
<dbReference type="PANTHER" id="PTHR12903">
    <property type="entry name" value="MITOCHONDRIAL RIBOSOMAL PROTEIN L24"/>
    <property type="match status" value="1"/>
</dbReference>
<dbReference type="Pfam" id="PF17136">
    <property type="entry name" value="ribosomal_L24"/>
    <property type="match status" value="1"/>
</dbReference>
<dbReference type="SUPFAM" id="SSF50104">
    <property type="entry name" value="Translation proteins SH3-like domain"/>
    <property type="match status" value="1"/>
</dbReference>
<protein>
    <recommendedName>
        <fullName evidence="1">Large ribosomal subunit protein uL24</fullName>
    </recommendedName>
    <alternativeName>
        <fullName evidence="2">50S ribosomal protein L24</fullName>
    </alternativeName>
</protein>
<keyword id="KW-1185">Reference proteome</keyword>
<keyword id="KW-0687">Ribonucleoprotein</keyword>
<keyword id="KW-0689">Ribosomal protein</keyword>
<keyword id="KW-0694">RNA-binding</keyword>
<keyword id="KW-0699">rRNA-binding</keyword>
<gene>
    <name evidence="1" type="primary">rplX</name>
    <name type="ordered locus">DNO_1264</name>
</gene>
<comment type="function">
    <text evidence="1">One of two assembly initiator proteins, it binds directly to the 5'-end of the 23S rRNA, where it nucleates assembly of the 50S subunit.</text>
</comment>
<comment type="function">
    <text evidence="1">One of the proteins that surrounds the polypeptide exit tunnel on the outside of the subunit.</text>
</comment>
<comment type="subunit">
    <text evidence="1">Part of the 50S ribosomal subunit.</text>
</comment>
<comment type="similarity">
    <text evidence="1">Belongs to the universal ribosomal protein uL24 family.</text>
</comment>
<evidence type="ECO:0000255" key="1">
    <source>
        <dbReference type="HAMAP-Rule" id="MF_01326"/>
    </source>
</evidence>
<evidence type="ECO:0000305" key="2"/>
<organism>
    <name type="scientific">Dichelobacter nodosus (strain VCS1703A)</name>
    <dbReference type="NCBI Taxonomy" id="246195"/>
    <lineage>
        <taxon>Bacteria</taxon>
        <taxon>Pseudomonadati</taxon>
        <taxon>Pseudomonadota</taxon>
        <taxon>Gammaproteobacteria</taxon>
        <taxon>Cardiobacteriales</taxon>
        <taxon>Cardiobacteriaceae</taxon>
        <taxon>Dichelobacter</taxon>
    </lineage>
</organism>
<reference key="1">
    <citation type="journal article" date="2007" name="Nat. Biotechnol.">
        <title>Genome sequence and identification of candidate vaccine antigens from the animal pathogen Dichelobacter nodosus.</title>
        <authorList>
            <person name="Myers G.S.A."/>
            <person name="Parker D."/>
            <person name="Al-Hasani K."/>
            <person name="Kennan R.M."/>
            <person name="Seemann T."/>
            <person name="Ren Q."/>
            <person name="Badger J.H."/>
            <person name="Selengut J.D."/>
            <person name="Deboy R.T."/>
            <person name="Tettelin H."/>
            <person name="Boyce J.D."/>
            <person name="McCarl V.P."/>
            <person name="Han X."/>
            <person name="Nelson W.C."/>
            <person name="Madupu R."/>
            <person name="Mohamoud Y."/>
            <person name="Holley T."/>
            <person name="Fedorova N."/>
            <person name="Khouri H."/>
            <person name="Bottomley S.P."/>
            <person name="Whittington R.J."/>
            <person name="Adler B."/>
            <person name="Songer J.G."/>
            <person name="Rood J.I."/>
            <person name="Paulsen I.T."/>
        </authorList>
    </citation>
    <scope>NUCLEOTIDE SEQUENCE [LARGE SCALE GENOMIC DNA]</scope>
    <source>
        <strain>VCS1703A</strain>
    </source>
</reference>
<proteinExistence type="inferred from homology"/>
<accession>A5EX88</accession>
<sequence>MKRIKKGDEVIVIAGRSENKGKRGKVVAVKDDTVIIEGINQVSKHVRPNPQLGIEGGIVKKEAGIHISNVMLFNAETGKRDRVGFKIEDGVKFRYYKSTGKRID</sequence>
<name>RL24_DICNV</name>